<keyword id="KW-0002">3D-structure</keyword>
<keyword id="KW-0067">ATP-binding</keyword>
<keyword id="KW-0963">Cytoplasm</keyword>
<keyword id="KW-0968">Cytoplasmic vesicle</keyword>
<keyword id="KW-0225">Disease variant</keyword>
<keyword id="KW-0333">Golgi apparatus</keyword>
<keyword id="KW-0433">Leucine-rich repeat</keyword>
<keyword id="KW-0496">Mitochondrion</keyword>
<keyword id="KW-0547">Nucleotide-binding</keyword>
<keyword id="KW-0539">Nucleus</keyword>
<keyword id="KW-1267">Proteomics identification</keyword>
<keyword id="KW-1185">Reference proteome</keyword>
<keyword id="KW-0677">Repeat</keyword>
<reference key="1">
    <citation type="journal article" date="2002" name="Hum. Reprod.">
        <title>A human homologue of mouse Mater, a maternal effect gene essential for early embryonic development.</title>
        <authorList>
            <person name="Tong Z.-B."/>
            <person name="Bondy C.A."/>
            <person name="Zhou J."/>
            <person name="Nelson L.M."/>
        </authorList>
    </citation>
    <scope>NUCLEOTIDE SEQUENCE [MRNA]</scope>
    <scope>TISSUE SPECIFICITY</scope>
    <scope>VARIANTS ILE-459; THR-912 AND THR-1097</scope>
    <source>
        <tissue>Ovary</tissue>
    </source>
</reference>
<reference key="2">
    <citation type="journal article" date="2003" name="Nat. Rev. Mol. Cell Biol.">
        <title>NALPs: a novel protein family involved in inflammation.</title>
        <authorList>
            <person name="Tschopp J."/>
            <person name="Martinon F."/>
            <person name="Burns K."/>
        </authorList>
    </citation>
    <scope>NUCLEOTIDE SEQUENCE [MRNA]</scope>
    <scope>VARIANT THR-1097</scope>
</reference>
<reference key="3">
    <citation type="journal article" date="2004" name="Nature">
        <title>The DNA sequence and biology of human chromosome 19.</title>
        <authorList>
            <person name="Grimwood J."/>
            <person name="Gordon L.A."/>
            <person name="Olsen A.S."/>
            <person name="Terry A."/>
            <person name="Schmutz J."/>
            <person name="Lamerdin J.E."/>
            <person name="Hellsten U."/>
            <person name="Goodstein D."/>
            <person name="Couronne O."/>
            <person name="Tran-Gyamfi M."/>
            <person name="Aerts A."/>
            <person name="Altherr M."/>
            <person name="Ashworth L."/>
            <person name="Bajorek E."/>
            <person name="Black S."/>
            <person name="Branscomb E."/>
            <person name="Caenepeel S."/>
            <person name="Carrano A.V."/>
            <person name="Caoile C."/>
            <person name="Chan Y.M."/>
            <person name="Christensen M."/>
            <person name="Cleland C.A."/>
            <person name="Copeland A."/>
            <person name="Dalin E."/>
            <person name="Dehal P."/>
            <person name="Denys M."/>
            <person name="Detter J.C."/>
            <person name="Escobar J."/>
            <person name="Flowers D."/>
            <person name="Fotopulos D."/>
            <person name="Garcia C."/>
            <person name="Georgescu A.M."/>
            <person name="Glavina T."/>
            <person name="Gomez M."/>
            <person name="Gonzales E."/>
            <person name="Groza M."/>
            <person name="Hammon N."/>
            <person name="Hawkins T."/>
            <person name="Haydu L."/>
            <person name="Ho I."/>
            <person name="Huang W."/>
            <person name="Israni S."/>
            <person name="Jett J."/>
            <person name="Kadner K."/>
            <person name="Kimball H."/>
            <person name="Kobayashi A."/>
            <person name="Larionov V."/>
            <person name="Leem S.-H."/>
            <person name="Lopez F."/>
            <person name="Lou Y."/>
            <person name="Lowry S."/>
            <person name="Malfatti S."/>
            <person name="Martinez D."/>
            <person name="McCready P.M."/>
            <person name="Medina C."/>
            <person name="Morgan J."/>
            <person name="Nelson K."/>
            <person name="Nolan M."/>
            <person name="Ovcharenko I."/>
            <person name="Pitluck S."/>
            <person name="Pollard M."/>
            <person name="Popkie A.P."/>
            <person name="Predki P."/>
            <person name="Quan G."/>
            <person name="Ramirez L."/>
            <person name="Rash S."/>
            <person name="Retterer J."/>
            <person name="Rodriguez A."/>
            <person name="Rogers S."/>
            <person name="Salamov A."/>
            <person name="Salazar A."/>
            <person name="She X."/>
            <person name="Smith D."/>
            <person name="Slezak T."/>
            <person name="Solovyev V."/>
            <person name="Thayer N."/>
            <person name="Tice H."/>
            <person name="Tsai M."/>
            <person name="Ustaszewska A."/>
            <person name="Vo N."/>
            <person name="Wagner M."/>
            <person name="Wheeler J."/>
            <person name="Wu K."/>
            <person name="Xie G."/>
            <person name="Yang J."/>
            <person name="Dubchak I."/>
            <person name="Furey T.S."/>
            <person name="DeJong P."/>
            <person name="Dickson M."/>
            <person name="Gordon D."/>
            <person name="Eichler E.E."/>
            <person name="Pennacchio L.A."/>
            <person name="Richardson P."/>
            <person name="Stubbs L."/>
            <person name="Rokhsar D.S."/>
            <person name="Myers R.M."/>
            <person name="Rubin E.M."/>
            <person name="Lucas S.M."/>
        </authorList>
    </citation>
    <scope>NUCLEOTIDE SEQUENCE [LARGE SCALE GENOMIC DNA]</scope>
</reference>
<reference key="4">
    <citation type="journal article" date="2009" name="Mol. Hum. Reprod.">
        <title>MATER protein as substrate of PKCepsilon in human cumulus cells.</title>
        <authorList>
            <person name="Maraldi T."/>
            <person name="Riccio M."/>
            <person name="Sena P."/>
            <person name="Marzona L."/>
            <person name="Nicoli A."/>
            <person name="La Marca A."/>
            <person name="Marmiroli S."/>
            <person name="Bertacchini J."/>
            <person name="La Sala G."/>
            <person name="De Pol A."/>
        </authorList>
    </citation>
    <scope>INTERACTION WITH PRKCE</scope>
    <scope>SUBCELLULAR LOCATION</scope>
    <scope>TISSUE SPECIFICITY</scope>
    <scope>PHOSPHORYLATION</scope>
</reference>
<reference key="5">
    <citation type="journal article" date="2009" name="Reprod. BioMed. Online">
        <title>Human MATER localization in specific cell domains of oocytes and follicular cells.</title>
        <authorList>
            <person name="Sena P."/>
            <person name="Riccio M."/>
            <person name="Marzona L."/>
            <person name="Nicoli A."/>
            <person name="Marsella T."/>
            <person name="Marmiroli S."/>
            <person name="Bertacchini J."/>
            <person name="Fano R.A."/>
            <person name="La Sala G.B."/>
            <person name="De Pol A."/>
        </authorList>
    </citation>
    <scope>SUBCELLULAR LOCATION</scope>
    <scope>DEVELOPMENTAL STAGE</scope>
</reference>
<reference key="6">
    <citation type="journal article" date="2014" name="Dev. Biol.">
        <title>The role of MATER in endoplasmic reticulum distribution and calcium homeostasis in mouse oocytes.</title>
        <authorList>
            <person name="Kim B."/>
            <person name="Zhang X."/>
            <person name="Kan R."/>
            <person name="Cohen R."/>
            <person name="Mukai C."/>
            <person name="Travis A.J."/>
            <person name="Coonrod S.A."/>
        </authorList>
    </citation>
    <scope>INTERACTION WITH TUBB3</scope>
</reference>
<reference key="7">
    <citation type="journal article" date="2015" name="Mol. Hum. Reprod.">
        <title>Identification of a human subcortical maternal complex.</title>
        <authorList>
            <person name="Zhu K."/>
            <person name="Yan L."/>
            <person name="Zhang X."/>
            <person name="Lu X."/>
            <person name="Wang T."/>
            <person name="Yan J."/>
            <person name="Liu X."/>
            <person name="Qiao J."/>
            <person name="Li L."/>
        </authorList>
    </citation>
    <scope>IDENTIFICATION IN THE SCMC COMPLEX</scope>
    <scope>SUBCELLULAR LOCATION</scope>
    <scope>DEVELOPMENTAL STAGE</scope>
</reference>
<reference key="8">
    <citation type="journal article" date="2023" name="Cell">
        <title>Mammalian oocytes store proteins for the early embryo on cytoplasmic lattices.</title>
        <authorList>
            <person name="Jentoft I.M.A."/>
            <person name="Baeuerlein F.J.B."/>
            <person name="Welp L.M."/>
            <person name="Cooper B.H."/>
            <person name="Petrovic A."/>
            <person name="So C."/>
            <person name="Penir S.M."/>
            <person name="Politi A.Z."/>
            <person name="Horokhovskyi Y."/>
            <person name="Takala I."/>
            <person name="Eckel H."/>
            <person name="Moltrecht R."/>
            <person name="Lenart P."/>
            <person name="Cavazza T."/>
            <person name="Liepe J."/>
            <person name="Brose N."/>
            <person name="Urlaub H."/>
            <person name="Fernandez-Busnadiego R."/>
            <person name="Schuh M."/>
        </authorList>
    </citation>
    <scope>SUBCELLULAR LOCATION</scope>
</reference>
<reference evidence="24 25" key="9">
    <citation type="journal article" date="2024" name="Nat. Struct. Mol. Biol.">
        <title>Cryo-EM structure of the human subcortical maternal complex and the associated discovery of infertility-associated variants.</title>
        <authorList>
            <person name="Chi P."/>
            <person name="Ou G."/>
            <person name="Liu S."/>
            <person name="Ma Q."/>
            <person name="Lu Y."/>
            <person name="Li J."/>
            <person name="Li J."/>
            <person name="Qi Q."/>
            <person name="Han Z."/>
            <person name="Zhang Z."/>
            <person name="Liu Q."/>
            <person name="Guo L."/>
            <person name="Chen J."/>
            <person name="Wang X."/>
            <person name="Huang W."/>
            <person name="Li L."/>
            <person name="Deng D."/>
        </authorList>
    </citation>
    <scope>STRUCTURE BY ELECTRON MICROSCOPY (3.01 ANGSTROMS) OF 58-1200 IN COMPLEX WITH TLE6 AND OOEP</scope>
    <scope>IDENTIFICATION IN THE SCMC COMPLEX</scope>
    <scope>MUTAGENESIS OF 60-PHE--TYR-63; GLU-71 AND GLU-107</scope>
</reference>
<reference key="10">
    <citation type="journal article" date="2015" name="Nat. Commun.">
        <title>Mutations in NLRP5 are associated with reproductive wastage and multilocus imprinting disorders in humans.</title>
        <authorList>
            <person name="Docherty L.E."/>
            <person name="Rezwan F.I."/>
            <person name="Poole R.L."/>
            <person name="Turner C.L."/>
            <person name="Kivuva E."/>
            <person name="Maher E.R."/>
            <person name="Smithson S.F."/>
            <person name="Hamilton-Shield J.P."/>
            <person name="Patalan M."/>
            <person name="Gizewska M."/>
            <person name="Peregud-Pogorzelski J."/>
            <person name="Beygo J."/>
            <person name="Buiting K."/>
            <person name="Horsthemke B."/>
            <person name="Soellner L."/>
            <person name="Begemann M."/>
            <person name="Eggermann T."/>
            <person name="Baple E."/>
            <person name="Mansour S."/>
            <person name="Temple I.K."/>
            <person name="Mackay D.J."/>
        </authorList>
    </citation>
    <scope>VARIANTS THR-52; GLN-76; VAL-555; ARG-774 AND 785-GLN--ASN-1200 DEL</scope>
</reference>
<reference key="11">
    <citation type="journal article" date="2017" name="Clin. Immunol.">
        <title>Genetic modifiers of multiple sclerosis progression, severity and onset.</title>
        <authorList>
            <person name="Sadovnick A.D."/>
            <person name="Traboulsee A.L."/>
            <person name="Zhao Y."/>
            <person name="Bernales C.Q."/>
            <person name="Encarnacion M."/>
            <person name="Ross J.P."/>
            <person name="Yee I.M."/>
            <person name="Criscuoli M.G."/>
            <person name="Vilarino-Gueell C."/>
        </authorList>
    </citation>
    <scope>VARIANTS ILE-459 AND LEU-761</scope>
</reference>
<reference key="12">
    <citation type="journal article" date="2019" name="Clin. Epigenetics">
        <title>The phenotypic variations of multi-locus imprinting disturbances associated with maternal-effect variants of NLRP5 range from overt imprinting disorder to apparently healthy phenotype.</title>
        <authorList>
            <person name="Sparago A."/>
            <person name="Verma A."/>
            <person name="Patricelli M.G."/>
            <person name="Pignata L."/>
            <person name="Russo S."/>
            <person name="Calzari L."/>
            <person name="De Francesco N."/>
            <person name="Del Prete R."/>
            <person name="Palumbo O."/>
            <person name="Carella M."/>
            <person name="Mackay D.J.G."/>
            <person name="Rezwan F.I."/>
            <person name="Angelini C."/>
            <person name="Cerrato F."/>
            <person name="Cubellis M.V."/>
            <person name="Riccio A."/>
        </authorList>
    </citation>
    <scope>VARIANTS 353-ARG--ASN-1200 DEL AND CYS-533</scope>
</reference>
<reference key="13">
    <citation type="journal article" date="2019" name="Eur. J. Hum. Genet.">
        <title>Search for cis-acting factors and maternal effect variants in Silver-Russell patients with ICR1 hypomethylation and their mothers.</title>
        <authorList>
            <person name="Soellner L."/>
            <person name="Kraft F."/>
            <person name="Sauer S."/>
            <person name="Begemann M."/>
            <person name="Kurth I."/>
            <person name="Elbracht M."/>
            <person name="Eggermann T."/>
        </authorList>
    </citation>
    <scope>VARIANT ASP-23</scope>
</reference>
<reference key="14">
    <citation type="journal article" date="2019" name="J. Med. Genet.">
        <title>Mutations in NLRP2 and NLRP5 cause female infertility characterised by early embryonic arrest.</title>
        <authorList>
            <person name="Mu J."/>
            <person name="Wang W."/>
            <person name="Chen B."/>
            <person name="Wu L."/>
            <person name="Li B."/>
            <person name="Mao X."/>
            <person name="Zhang Z."/>
            <person name="Fu J."/>
            <person name="Kuang Y."/>
            <person name="Sun X."/>
            <person name="Li Q."/>
            <person name="Jin L."/>
            <person name="He L."/>
            <person name="Sang Q."/>
            <person name="Wang L."/>
        </authorList>
    </citation>
    <scope>VARIANTS OZEMA19 98-GLN--ASN-1200 DEL; GLU-289; ILE-694 AND ILE-1107</scope>
    <scope>TISSUE SPECIFICITY</scope>
    <scope>INVOLVEMENT IN OZEMA19</scope>
</reference>
<reference key="15">
    <citation type="journal article" date="2020" name="Clin. Genet.">
        <title>A novel homozygous variant in NLRP5 is associate with human early embryonic arrest in a consanguineous Chinese family.</title>
        <authorList>
            <person name="Xu Y."/>
            <person name="Qian Y."/>
            <person name="Liu Y."/>
            <person name="Wang Q."/>
            <person name="Wang R."/>
            <person name="Zhou Y."/>
            <person name="Zhang C."/>
            <person name="Pang Z."/>
            <person name="Ye H."/>
            <person name="Xue S."/>
            <person name="Sun L."/>
        </authorList>
    </citation>
    <scope>VARIANT OZEMA19 LEU-354</scope>
</reference>
<reference key="16">
    <citation type="journal article" date="2021" name="Clin. Genet.">
        <title>Expanding the genetic and phenotypic spectrum of the subcortical maternal complex genes in recurrent preimplantation embryonic arrest.</title>
        <authorList>
            <person name="Zheng W."/>
            <person name="Hu H."/>
            <person name="Dai J."/>
            <person name="Zhang S."/>
            <person name="Gu Y."/>
            <person name="Dai C."/>
            <person name="Guo J."/>
            <person name="Xu X."/>
            <person name="Li Y."/>
            <person name="Zhang S."/>
            <person name="Hu L."/>
            <person name="Gong F."/>
            <person name="Lu G."/>
            <person name="Lin G."/>
        </authorList>
    </citation>
    <scope>VARIANTS OZEMA19 PRO-143; CYS-462; CYS-635; THR-893 AND TRP-1116</scope>
</reference>
<reference key="17">
    <citation type="journal article" date="2020" name="Gynecol. Endocrinol.">
        <title>A new NLRP5 mutation causes female infertility and total fertilization failure.</title>
        <authorList>
            <person name="Li M."/>
            <person name="Jia M."/>
            <person name="Zhao X."/>
            <person name="Shi R."/>
            <person name="Xue X."/>
        </authorList>
    </citation>
    <scope>VARIANTS OZEMA19 PRO-533 AND ARG-640</scope>
</reference>
<reference key="18">
    <citation type="journal article" date="2022" name="Hum. Mutat.">
        <title>Mutations in OOEP and NLRP5 identified in infertile patients with early embryonic arrest.</title>
        <authorList>
            <person name="Tong X."/>
            <person name="Jin J."/>
            <person name="Hu Z."/>
            <person name="Zhang Y."/>
            <person name="Fan H.Y."/>
            <person name="Zhang Y.L."/>
            <person name="Zhang S."/>
        </authorList>
    </citation>
    <scope>VARIANTS OZEMA19 LYS-324; LEU-401; ARG-793 AND PRO-1114</scope>
    <scope>INVOLVEMENT IN OZEMA19</scope>
</reference>
<organism>
    <name type="scientific">Homo sapiens</name>
    <name type="common">Human</name>
    <dbReference type="NCBI Taxonomy" id="9606"/>
    <lineage>
        <taxon>Eukaryota</taxon>
        <taxon>Metazoa</taxon>
        <taxon>Chordata</taxon>
        <taxon>Craniata</taxon>
        <taxon>Vertebrata</taxon>
        <taxon>Euteleostomi</taxon>
        <taxon>Mammalia</taxon>
        <taxon>Eutheria</taxon>
        <taxon>Euarchontoglires</taxon>
        <taxon>Primates</taxon>
        <taxon>Haplorrhini</taxon>
        <taxon>Catarrhini</taxon>
        <taxon>Hominidae</taxon>
        <taxon>Homo</taxon>
    </lineage>
</organism>
<name>NALP5_HUMAN</name>
<protein>
    <recommendedName>
        <fullName>NACHT, LRR and PYD domains-containing protein 5</fullName>
    </recommendedName>
    <alternativeName>
        <fullName evidence="22">Mater protein homolog</fullName>
    </alternativeName>
    <alternativeName>
        <fullName evidence="22">Maternal Antigen that Embryos Require</fullName>
    </alternativeName>
</protein>
<sequence length="1200" mass="134342">MKVAGGLELGAAALLSASPRALVTLSTGPTCSILPKNPLFPQNLSSQPCIKMEGDKSLTFSSYGLQWCLYELDKEEFQTFKELLKKKSSESTTCSIPQFEIENANVECLALLLHEYYGASLAWATSISIFENMNLRTLSEKARDDMKRHSPEDPEATMTDQGPSKEKVPGISQAVQQDSATAAETKEQEISQAMEQEGATAAETEEQEISQAMEQEGATAAETEEQGHGGDTWDYKSHVMTKFAEEEDVRRSFENTAADWPEMQTLAGAFDSDRWGFRPRTVVLHGKSGIGKSALARRIVLCWAQGGLYQGMFSYVFFLPVREMQRKKESSVTEFISREWPDSQAPVTEIMSRPERLLFIIDGFDDLGSVLNNDTKLCKDWAEKQPPFTLIRSLLRKVLLPESFLIVTVRDVGTEKLKSEVVSPRYLLVRGISGEQRIHLLLERGIGEHQKTQGLRAIMNNRELLDQCQVPAVGSLICVALQLQDVVGESVAPFNQTLTGLHAAFVFHQLTPRGVVRRCLNLEERVVLKRFCRMAVEGVWNRKSVFDGDDLMVQGLGESELRALFHMNILLPDSHCEEYYTFFHLSLQDFCAALYYVLEGLEIEPALCPLYVEKTKRSMELKQAGFHIHSLWMKRFLFGLVSEDVRRPLEVLLGCPVPLGVKQKLLHWVSLLGQQPNATTPGDTLDAFHCLFETQDKEFVRLALNSFQEVWLPINQNLDLIASSFCLQHCPYLRKIRVDVKGIFPRDESAEACPVVPLWMRDKTLIEEQWEDFCSMLGTHPHLRQLDLGSSILTERAMKTLCAKLRHPTCKIQTLMFRNAQITPGVQHLWRIVMANRNLRSLNLGGTHLKEEDVRMACEALKHPKCLLESLRLDCCGLTHACYLKISQILTTSPSLKSLSLAGNKVTDQGVMPLSDALRVSQCALQKLILEDCGITATGCQSLASALVSNRSLTHLCLSNNSLGNEGVNLLCRSMRLPHCSLQRLMLNQCHLDTAGCGFLALALMGNSWLTHLSLSMNPVEDNGVKLLCEVMREPSCHLQDLELVKCHLTAACCESLSCVISRSRHLKSLDLTDNALGDGGVAALCEGLKQKNSVLARLGLKACGLTSDCCEALSLALSCNRHLTSLNLVQNNFSPKGMMKLCSAFACPTSNLQIIGLWKWQYPVQIRKLLEEVQLLKPRVVIDGSWHSFDEDDRYWWKN</sequence>
<comment type="function">
    <text evidence="1">Component of the subcortical maternal complex (SCMC), a multiprotein complex that plays a key role in early embryonic development. The SCMC complex is a structural constituent of cytoplasmic lattices, which consist in fibrous structures found in the cytoplasm of oocytes and preimplantation embryos. They are required to store maternal proteins critical for embryonic development, such as proteins that control epigenetic reprogramming of the preimplantation embryo, and prevent their degradation or activation. Required for the localization of cortical granules to the cortex of oocytes, via association with the cortical actin scaffold. Required for cortical actin clearance prior to oocyte exocytosis and prevention of polyspermy. Involved in regulating post-fertilization Ca(2+) release and endoplasmic reticulum storage (ER) storage via regulation of cellular localization. May be involved in the localization of mitochondria to the cytoplasm and perinuclear region in oocytes and early stage embryos, independent of its role in CPL formation.</text>
</comment>
<comment type="subunit">
    <text evidence="1 8 9 10 21">Component of the subcortical maternal complex (SCMC), at least composed of NLRP5, KHDC3, OOEP, and TLE6 isoform 1 (PubMed:25542835, PubMed:39379527). Within the complex, interacts with OOEP, KHDC3L and TLE6 (PubMed:25542835). The SCMC may facilitate translocation of its components between the nuclear and cytoplasmic compartments (PubMed:25542835). As part of the SCMC interacts with the SCMC-associated protein ZBED3 (By similarity). As part of the SCMC interacts with the SCMC-associated protein CFL1/Cofilin-1 (By similarity). Interacts with PRKCE (PubMed:19542546). Interacts with TUBB3 at cytoskeleton microtubules (PubMed:24374158).</text>
</comment>
<comment type="interaction">
    <interactant intactId="EBI-11071382">
        <id>P59047</id>
    </interactant>
    <interactant intactId="EBI-22731520">
        <id>Q587J8</id>
        <label>KHDC3L</label>
    </interactant>
    <organismsDiffer>false</organismsDiffer>
    <experiments>2</experiments>
</comment>
<comment type="interaction">
    <interactant intactId="EBI-11071382">
        <id>P59047</id>
    </interactant>
    <interactant intactId="EBI-18583589">
        <id>A6NGQ2</id>
        <label>OOEP</label>
    </interactant>
    <organismsDiffer>false</organismsDiffer>
    <experiments>2</experiments>
</comment>
<comment type="interaction">
    <interactant intactId="EBI-11071382">
        <id>P59047</id>
    </interactant>
    <interactant intactId="EBI-32711753">
        <id>Q9H808-1</id>
        <label>TLE6</label>
    </interactant>
    <organismsDiffer>false</organismsDiffer>
    <experiments>2</experiments>
</comment>
<comment type="subcellular location">
    <subcellularLocation>
        <location evidence="7 8 10 20">Cytoplasm</location>
    </subcellularLocation>
    <subcellularLocation>
        <location evidence="7">Cytoplasmic vesicle</location>
        <location evidence="7">Secretory vesicle</location>
        <location evidence="7">Cortical granule</location>
    </subcellularLocation>
    <subcellularLocation>
        <location evidence="7">Mitochondrion</location>
    </subcellularLocation>
    <subcellularLocation>
        <location evidence="7 10">Nucleus</location>
        <location evidence="7 10">Nucleolus</location>
    </subcellularLocation>
    <subcellularLocation>
        <location evidence="7">Golgi apparatus</location>
    </subcellularLocation>
    <text evidence="1 20">Core component of cytoplasmic lattices in oocytes (PubMed:37922900). In the subcortical cytoplasm of early embryos from the 1-cell to the blastocyst stages (By similarity). From the 2-cell stage, still detected in the subcortex, but excluded from cell-cell contact regions (By similarity). Expression largely disappears in blastocysts (By similarity). Located in mitochondria and nucleoli in primary follicle oocytes (By similarity).</text>
</comment>
<comment type="tissue specificity">
    <text evidence="5 8 14">Expressed in cumulus cells (at protein level) (PubMed:19542546). Highly abundant in oocytes and early embryos, however poorly expressed in somatic tissues such as the liver and spinal cord (PubMed:11925379, PubMed:30877238).</text>
</comment>
<comment type="developmental stage">
    <text evidence="7 10">Expressed at all stages during oocyte maturation, additionally expressed in granulosa cells and cumulus oophorus cells (PubMed:19192343). Expressed primarily with other SCMC components in the subcortex of oocytes and early embryos (PubMed:25542835). Expression is excluded from cell-cell contact regions after the 2-cell stage (PubMed:25542835).</text>
</comment>
<comment type="PTM">
    <text evidence="8">Phosphorylated by PRKCE.</text>
</comment>
<comment type="disease" evidence="14 16 17 18 19">
    <disease id="DI-06662">
        <name>Oocyte/zygote/embryo maturation arrest 19</name>
        <acronym>OZEMA19</acronym>
        <description>An autosomal recessive female infertility disorder characterized by reduced fertilization rate, oocyte maturation arrest at germinal vesicle stage, and early embryonic arrest.</description>
        <dbReference type="MIM" id="620333"/>
    </disease>
    <text>The disease is caused by variants affecting the gene represented in this entry.</text>
</comment>
<comment type="disease">
    <text evidence="11 13 15">NLRP5 variants have been found in a spectrum of phenotypes characterized by aberrant methylation of multiple imprinted loci, a condition known as multi-locus imprinting defect or multi-locus imprinting disturbance (MLID). MLID-related phenotype spectrum ranges from intrauterine death to different types of imprinting disorders, including Beckwith-Wiedemann syndrome (BWS), Silver-Russell syndrome (SRS), and non-specific developmental and behavioral manifestations. MLID has also been observed in individuals without overt clinical manifestations. Recurrent pregnancy loss has been reported in healthy women carrying NLRP5 variants.</text>
</comment>
<comment type="similarity">
    <text evidence="23">Belongs to the NLRP family.</text>
</comment>
<proteinExistence type="evidence at protein level"/>
<gene>
    <name type="primary">NLRP5</name>
    <name evidence="22" type="synonym">MATER</name>
    <name type="synonym">NALP5</name>
</gene>
<accession>P59047</accession>
<accession>A8MTY4</accession>
<accession>Q86W29</accession>
<feature type="chain" id="PRO_0000080890" description="NACHT, LRR and PYD domains-containing protein 5">
    <location>
        <begin position="1"/>
        <end position="1200"/>
    </location>
</feature>
<feature type="domain" description="Pyrin" evidence="2">
    <location>
        <begin position="57"/>
        <end position="148"/>
    </location>
</feature>
<feature type="domain" description="NACHT" evidence="3">
    <location>
        <begin position="280"/>
        <end position="602"/>
    </location>
</feature>
<feature type="repeat" description="LRR 1">
    <location>
        <begin position="704"/>
        <end position="727"/>
    </location>
</feature>
<feature type="repeat" description="LRR 2">
    <location>
        <begin position="730"/>
        <end position="753"/>
    </location>
</feature>
<feature type="repeat" description="LRR 3">
    <location>
        <begin position="780"/>
        <end position="803"/>
    </location>
</feature>
<feature type="repeat" description="LRR 4">
    <location>
        <begin position="809"/>
        <end position="832"/>
    </location>
</feature>
<feature type="repeat" description="LRR 5">
    <location>
        <begin position="836"/>
        <end position="863"/>
    </location>
</feature>
<feature type="repeat" description="LRR 6">
    <location>
        <begin position="865"/>
        <end position="892"/>
    </location>
</feature>
<feature type="repeat" description="LRR 7">
    <location>
        <begin position="893"/>
        <end position="916"/>
    </location>
</feature>
<feature type="repeat" description="LRR 8">
    <location>
        <begin position="950"/>
        <end position="973"/>
    </location>
</feature>
<feature type="repeat" description="LRR 9">
    <location>
        <begin position="979"/>
        <end position="1002"/>
    </location>
</feature>
<feature type="repeat" description="LRR 10">
    <location>
        <begin position="1007"/>
        <end position="1034"/>
    </location>
</feature>
<feature type="repeat" description="LRR 11">
    <location>
        <begin position="1036"/>
        <end position="1059"/>
    </location>
</feature>
<feature type="repeat" description="LRR 12">
    <location>
        <begin position="1064"/>
        <end position="1092"/>
    </location>
</feature>
<feature type="repeat" description="LRR 13">
    <location>
        <begin position="1121"/>
        <end position="1142"/>
    </location>
</feature>
<feature type="region of interest" description="Disordered" evidence="4">
    <location>
        <begin position="142"/>
        <end position="232"/>
    </location>
</feature>
<feature type="compositionally biased region" description="Basic and acidic residues" evidence="4">
    <location>
        <begin position="142"/>
        <end position="152"/>
    </location>
</feature>
<feature type="compositionally biased region" description="Polar residues" evidence="4">
    <location>
        <begin position="173"/>
        <end position="182"/>
    </location>
</feature>
<feature type="compositionally biased region" description="Low complexity" evidence="4">
    <location>
        <begin position="192"/>
        <end position="202"/>
    </location>
</feature>
<feature type="compositionally biased region" description="Low complexity" evidence="4">
    <location>
        <begin position="209"/>
        <end position="221"/>
    </location>
</feature>
<feature type="binding site" evidence="3">
    <location>
        <begin position="286"/>
        <end position="293"/>
    </location>
    <ligand>
        <name>ATP</name>
        <dbReference type="ChEBI" id="CHEBI:30616"/>
    </ligand>
</feature>
<feature type="sequence variant" id="VAR_084570" description="Found in a patient with features of Silver-Russell syndrome and multi-locus imprinting disturbance; uncertain significance; dbSNP:rs753824534." evidence="13">
    <original>V</original>
    <variation>D</variation>
    <location>
        <position position="23"/>
    </location>
</feature>
<feature type="sequence variant" id="VAR_084571" description="Found in patients with Beckwith-Wiedemann syndrome and multi-locus imprinting disturbance; when associated in cis with Q-76; uncertain significance; dbSNP:rs752189640." evidence="11">
    <original>M</original>
    <variation>T</variation>
    <location>
        <position position="52"/>
    </location>
</feature>
<feature type="sequence variant" id="VAR_084572" description="Found in patients with Beckwith-Wiedemann syndrome and multi-locus imprinting disturbance; when associated in cis with T-52; uncertain significance; dbSNP:rs758399773." evidence="11">
    <original>E</original>
    <variation>Q</variation>
    <location>
        <position position="76"/>
    </location>
</feature>
<feature type="sequence variant" id="VAR_084573" description="In OZEMA19." evidence="14">
    <location>
        <begin position="98"/>
        <end position="1200"/>
    </location>
</feature>
<feature type="sequence variant" id="VAR_084173" description="In OZEMA19; uncertain significance; dbSNP:rs746147069." evidence="17">
    <original>R</original>
    <variation>P</variation>
    <location>
        <position position="143"/>
    </location>
</feature>
<feature type="sequence variant" id="VAR_084574" description="In OZEMA19; uncertain significance." evidence="14">
    <original>G</original>
    <variation>E</variation>
    <location>
        <position position="289"/>
    </location>
</feature>
<feature type="sequence variant" id="VAR_088463" description="In OZEMA19; uncertain significance; dbSNP:rs1315962033." evidence="19">
    <original>M</original>
    <variation>K</variation>
    <location>
        <position position="324"/>
    </location>
</feature>
<feature type="sequence variant" id="VAR_084575" description="Found in an individual with no overt clinical disease and multi-locus imprinting disturbance; uncertain significance." evidence="15">
    <location>
        <begin position="353"/>
        <end position="1200"/>
    </location>
</feature>
<feature type="sequence variant" id="VAR_084576" description="In OZEMA19; uncertain significance; dbSNP:rs763987829." evidence="16">
    <original>P</original>
    <variation>L</variation>
    <location>
        <position position="354"/>
    </location>
</feature>
<feature type="sequence variant" id="VAR_088464" description="In OZEMA19; uncertain significance; dbSNP:rs2123304620." evidence="19">
    <original>P</original>
    <variation>L</variation>
    <location>
        <position position="401"/>
    </location>
</feature>
<feature type="sequence variant" id="VAR_060095" description="In dbSNP:rs471979." evidence="5 12">
    <original>M</original>
    <variation>I</variation>
    <location>
        <position position="459"/>
    </location>
</feature>
<feature type="sequence variant" id="VAR_084174" description="In OZEMA19; uncertain significance; dbSNP:rs199475775." evidence="17">
    <original>R</original>
    <variation>C</variation>
    <location>
        <position position="462"/>
    </location>
</feature>
<feature type="sequence variant" id="VAR_084577" description="Found in a patient with mild cognitive retardation and multi-locus imprinting disturbance; uncertain significance; dbSNP:rs754695863." evidence="15">
    <original>R</original>
    <variation>C</variation>
    <location>
        <position position="533"/>
    </location>
</feature>
<feature type="sequence variant" id="VAR_084578" description="In OZEMA19; uncertain significance; dbSNP:rs752560793." evidence="18">
    <original>R</original>
    <variation>P</variation>
    <location>
        <position position="533"/>
    </location>
</feature>
<feature type="sequence variant" id="VAR_084579" description="Found in a patient with Beckwith-Wiedemann syndrome and multi-locus imprinting disturbance; uncertain significance." evidence="11">
    <original>G</original>
    <variation>V</variation>
    <location>
        <position position="555"/>
    </location>
</feature>
<feature type="sequence variant" id="VAR_060096" description="In dbSNP:rs34395092.">
    <original>H</original>
    <variation>P</variation>
    <location>
        <position position="584"/>
    </location>
</feature>
<feature type="sequence variant" id="VAR_084175" description="In OZEMA19; uncertain significance; dbSNP:rs373407667." evidence="17">
    <original>R</original>
    <variation>C</variation>
    <location>
        <position position="635"/>
    </location>
</feature>
<feature type="sequence variant" id="VAR_084580" description="In OZEMA19; uncertain significance." evidence="18">
    <original>L</original>
    <variation>R</variation>
    <location>
        <position position="640"/>
    </location>
</feature>
<feature type="sequence variant" id="VAR_084581" description="In OZEMA19; uncertain significance; dbSNP:rs1235069213." evidence="14">
    <original>T</original>
    <variation>I</variation>
    <location>
        <position position="694"/>
    </location>
</feature>
<feature type="sequence variant" id="VAR_060097" description="In dbSNP:rs17713875." evidence="12">
    <original>R</original>
    <variation>L</variation>
    <location>
        <position position="761"/>
    </location>
</feature>
<feature type="sequence variant" id="VAR_084582" description="Found in a patient with Silver-Russell syndrome and multi-locus imprinting disturbance; uncertain significance; dbSNP:rs370837790." evidence="11">
    <original>C</original>
    <variation>R</variation>
    <location>
        <position position="774"/>
    </location>
</feature>
<feature type="sequence variant" id="VAR_084583" description="Found in a patient with Beckwith-Wiedemann syndrome and multi-locus imprinting disturbance; uncertain significance; dbSNP:rs200446614." evidence="11">
    <location>
        <begin position="785"/>
        <end position="1200"/>
    </location>
</feature>
<feature type="sequence variant" id="VAR_088465" description="In OZEMA19; uncertain significance; dbSNP:rs1983168721." evidence="19">
    <original>L</original>
    <variation>R</variation>
    <location>
        <position position="793"/>
    </location>
</feature>
<feature type="sequence variant" id="VAR_084176" description="In OZEMA19; uncertain significance; dbSNP:rs769920247." evidence="17">
    <original>S</original>
    <variation>T</variation>
    <location>
        <position position="893"/>
    </location>
</feature>
<feature type="sequence variant" id="VAR_060098" description="In dbSNP:rs16986899." evidence="5">
    <original>M</original>
    <variation>T</variation>
    <location>
        <position position="912"/>
    </location>
</feature>
<feature type="sequence variant" id="VAR_060099" description="In dbSNP:rs3103057." evidence="5 6">
    <original>A</original>
    <variation>T</variation>
    <location>
        <position position="1097"/>
    </location>
</feature>
<feature type="sequence variant" id="VAR_084584" description="In OZEMA19; uncertain significance; dbSNP:rs1381057964." evidence="14">
    <original>T</original>
    <variation>I</variation>
    <location>
        <position position="1107"/>
    </location>
</feature>
<feature type="sequence variant" id="VAR_060100" description="In dbSNP:rs12462795.">
    <original>S</original>
    <variation>C</variation>
    <location>
        <position position="1108"/>
    </location>
</feature>
<feature type="sequence variant" id="VAR_088466" description="In OZEMA19; uncertain significance; dbSNP:rs2123346394." evidence="19">
    <original>L</original>
    <variation>P</variation>
    <location>
        <position position="1114"/>
    </location>
</feature>
<feature type="sequence variant" id="VAR_088467" description="In OZEMA19; uncertain significance; dbSNP:rs773877703." evidence="17">
    <original>L</original>
    <variation>W</variation>
    <location>
        <position position="1116"/>
    </location>
</feature>
<feature type="sequence variant" id="VAR_060101" description="In dbSNP:rs10409555.">
    <original>V</original>
    <variation>I</variation>
    <location>
        <position position="1181"/>
    </location>
</feature>
<feature type="sequence variant" id="VAR_060102" description="In dbSNP:rs36118060.">
    <original>R</original>
    <variation>Q</variation>
    <location>
        <position position="1195"/>
    </location>
</feature>
<feature type="mutagenesis site" description="Impaired formation of the subcortical maternal complex (SCMC)." evidence="21">
    <original>FSSY</original>
    <variation>ASSA</variation>
    <location>
        <begin position="60"/>
        <end position="63"/>
    </location>
</feature>
<feature type="mutagenesis site" description="Impaired formation of the subcortical maternal complex (SCMC)." evidence="21">
    <original>E</original>
    <variation>A</variation>
    <location>
        <position position="71"/>
    </location>
</feature>
<feature type="mutagenesis site" description="Impaired formation of the subcortical maternal complex (SCMC)." evidence="21">
    <original>E</original>
    <variation>A</variation>
    <location>
        <position position="107"/>
    </location>
</feature>
<feature type="sequence conflict" description="In Ref. 1; AAL15549." evidence="23" ref="1">
    <original>V</original>
    <variation>A</variation>
    <location>
        <position position="506"/>
    </location>
</feature>
<feature type="sequence conflict" description="In Ref. 1; AAL15549." evidence="23" ref="1">
    <original>F</original>
    <variation>S</variation>
    <location>
        <position position="999"/>
    </location>
</feature>
<feature type="helix" evidence="26">
    <location>
        <begin position="59"/>
        <end position="69"/>
    </location>
</feature>
<feature type="helix" evidence="26">
    <location>
        <begin position="74"/>
        <end position="90"/>
    </location>
</feature>
<feature type="strand" evidence="26">
    <location>
        <begin position="92"/>
        <end position="94"/>
    </location>
</feature>
<feature type="helix" evidence="26">
    <location>
        <begin position="98"/>
        <end position="103"/>
    </location>
</feature>
<feature type="helix" evidence="26">
    <location>
        <begin position="106"/>
        <end position="117"/>
    </location>
</feature>
<feature type="helix" evidence="26">
    <location>
        <begin position="119"/>
        <end position="132"/>
    </location>
</feature>
<feature type="helix" evidence="26">
    <location>
        <begin position="137"/>
        <end position="149"/>
    </location>
</feature>
<feature type="helix" evidence="26">
    <location>
        <begin position="231"/>
        <end position="249"/>
    </location>
</feature>
<feature type="helix" evidence="26">
    <location>
        <begin position="262"/>
        <end position="268"/>
    </location>
</feature>
<feature type="strand" evidence="26">
    <location>
        <begin position="282"/>
        <end position="286"/>
    </location>
</feature>
<feature type="strand" evidence="27">
    <location>
        <begin position="288"/>
        <end position="290"/>
    </location>
</feature>
<feature type="helix" evidence="26">
    <location>
        <begin position="292"/>
        <end position="305"/>
    </location>
</feature>
<feature type="strand" evidence="26">
    <location>
        <begin position="306"/>
        <end position="309"/>
    </location>
</feature>
<feature type="turn" evidence="26">
    <location>
        <begin position="310"/>
        <end position="312"/>
    </location>
</feature>
<feature type="strand" evidence="26">
    <location>
        <begin position="317"/>
        <end position="320"/>
    </location>
</feature>
<feature type="helix" evidence="26">
    <location>
        <begin position="321"/>
        <end position="326"/>
    </location>
</feature>
<feature type="strand" evidence="26">
    <location>
        <begin position="328"/>
        <end position="330"/>
    </location>
</feature>
<feature type="helix" evidence="26">
    <location>
        <begin position="332"/>
        <end position="339"/>
    </location>
</feature>
<feature type="strand" evidence="26">
    <location>
        <begin position="340"/>
        <end position="343"/>
    </location>
</feature>
<feature type="helix" evidence="26">
    <location>
        <begin position="347"/>
        <end position="350"/>
    </location>
</feature>
<feature type="strand" evidence="26">
    <location>
        <begin position="358"/>
        <end position="362"/>
    </location>
</feature>
<feature type="helix" evidence="26">
    <location>
        <begin position="364"/>
        <end position="366"/>
    </location>
</feature>
<feature type="helix" evidence="26">
    <location>
        <begin position="369"/>
        <end position="372"/>
    </location>
</feature>
<feature type="strand" evidence="26">
    <location>
        <begin position="381"/>
        <end position="383"/>
    </location>
</feature>
<feature type="helix" evidence="26">
    <location>
        <begin position="387"/>
        <end position="395"/>
    </location>
</feature>
<feature type="strand" evidence="27">
    <location>
        <begin position="398"/>
        <end position="400"/>
    </location>
</feature>
<feature type="strand" evidence="27">
    <location>
        <begin position="405"/>
        <end position="408"/>
    </location>
</feature>
<feature type="helix" evidence="26">
    <location>
        <begin position="411"/>
        <end position="417"/>
    </location>
</feature>
<feature type="turn" evidence="26">
    <location>
        <begin position="418"/>
        <end position="420"/>
    </location>
</feature>
<feature type="strand" evidence="26">
    <location>
        <begin position="421"/>
        <end position="423"/>
    </location>
</feature>
<feature type="strand" evidence="26">
    <location>
        <begin position="425"/>
        <end position="429"/>
    </location>
</feature>
<feature type="helix" evidence="26">
    <location>
        <begin position="473"/>
        <end position="482"/>
    </location>
</feature>
<feature type="helix" evidence="26">
    <location>
        <begin position="498"/>
        <end position="510"/>
    </location>
</feature>
<feature type="helix" evidence="26">
    <location>
        <begin position="522"/>
        <end position="541"/>
    </location>
</feature>
<feature type="helix" evidence="26">
    <location>
        <begin position="548"/>
        <end position="554"/>
    </location>
</feature>
<feature type="helix" evidence="26">
    <location>
        <begin position="558"/>
        <end position="564"/>
    </location>
</feature>
<feature type="helix" evidence="26">
    <location>
        <begin position="585"/>
        <end position="597"/>
    </location>
</feature>
<feature type="helix" evidence="26">
    <location>
        <begin position="619"/>
        <end position="624"/>
    </location>
</feature>
<feature type="helix" evidence="26">
    <location>
        <begin position="630"/>
        <end position="639"/>
    </location>
</feature>
<feature type="helix" evidence="26">
    <location>
        <begin position="643"/>
        <end position="653"/>
    </location>
</feature>
<feature type="helix" evidence="26">
    <location>
        <begin position="661"/>
        <end position="673"/>
    </location>
</feature>
<feature type="helix" evidence="26">
    <location>
        <begin position="681"/>
        <end position="694"/>
    </location>
</feature>
<feature type="helix" evidence="26">
    <location>
        <begin position="697"/>
        <end position="704"/>
    </location>
</feature>
<feature type="strand" evidence="26">
    <location>
        <begin position="709"/>
        <end position="714"/>
    </location>
</feature>
<feature type="helix" evidence="26">
    <location>
        <begin position="717"/>
        <end position="727"/>
    </location>
</feature>
<feature type="strand" evidence="26">
    <location>
        <begin position="735"/>
        <end position="740"/>
    </location>
</feature>
<feature type="turn" evidence="26">
    <location>
        <begin position="748"/>
        <end position="750"/>
    </location>
</feature>
<feature type="strand" evidence="26">
    <location>
        <begin position="754"/>
        <end position="756"/>
    </location>
</feature>
<feature type="helix" evidence="26">
    <location>
        <begin position="758"/>
        <end position="761"/>
    </location>
</feature>
<feature type="helix" evidence="26">
    <location>
        <begin position="765"/>
        <end position="779"/>
    </location>
</feature>
<feature type="strand" evidence="26">
    <location>
        <begin position="785"/>
        <end position="790"/>
    </location>
</feature>
<feature type="helix" evidence="26">
    <location>
        <begin position="795"/>
        <end position="806"/>
    </location>
</feature>
<feature type="strand" evidence="26">
    <location>
        <begin position="814"/>
        <end position="821"/>
    </location>
</feature>
<feature type="helix" evidence="26">
    <location>
        <begin position="823"/>
        <end position="828"/>
    </location>
</feature>
<feature type="helix" evidence="26">
    <location>
        <begin position="830"/>
        <end position="835"/>
    </location>
</feature>
<feature type="strand" evidence="26">
    <location>
        <begin position="841"/>
        <end position="846"/>
    </location>
</feature>
<feature type="helix" evidence="26">
    <location>
        <begin position="851"/>
        <end position="861"/>
    </location>
</feature>
<feature type="strand" evidence="26">
    <location>
        <begin position="870"/>
        <end position="875"/>
    </location>
</feature>
<feature type="helix" evidence="26">
    <location>
        <begin position="880"/>
        <end position="892"/>
    </location>
</feature>
<feature type="strand" evidence="26">
    <location>
        <begin position="898"/>
        <end position="904"/>
    </location>
</feature>
<feature type="helix" evidence="26">
    <location>
        <begin position="908"/>
        <end position="919"/>
    </location>
</feature>
<feature type="strand" evidence="26">
    <location>
        <begin position="929"/>
        <end position="932"/>
    </location>
</feature>
<feature type="helix" evidence="26">
    <location>
        <begin position="937"/>
        <end position="949"/>
    </location>
</feature>
<feature type="strand" evidence="26">
    <location>
        <begin position="955"/>
        <end position="960"/>
    </location>
</feature>
<feature type="helix" evidence="26">
    <location>
        <begin position="964"/>
        <end position="975"/>
    </location>
</feature>
<feature type="strand" evidence="26">
    <location>
        <begin position="984"/>
        <end position="986"/>
    </location>
</feature>
<feature type="helix" evidence="26">
    <location>
        <begin position="994"/>
        <end position="1004"/>
    </location>
</feature>
<feature type="strand" evidence="26">
    <location>
        <begin position="1012"/>
        <end position="1014"/>
    </location>
</feature>
<feature type="helix" evidence="26">
    <location>
        <begin position="1022"/>
        <end position="1032"/>
    </location>
</feature>
<feature type="strand" evidence="26">
    <location>
        <begin position="1041"/>
        <end position="1046"/>
    </location>
</feature>
<feature type="helix" evidence="26">
    <location>
        <begin position="1051"/>
        <end position="1063"/>
    </location>
</feature>
<feature type="strand" evidence="26">
    <location>
        <begin position="1072"/>
        <end position="1074"/>
    </location>
</feature>
<feature type="helix" evidence="26">
    <location>
        <begin position="1078"/>
        <end position="1089"/>
    </location>
</feature>
<feature type="strand" evidence="27">
    <location>
        <begin position="1091"/>
        <end position="1093"/>
    </location>
</feature>
<feature type="strand" evidence="26">
    <location>
        <begin position="1101"/>
        <end position="1104"/>
    </location>
</feature>
<feature type="helix" evidence="26">
    <location>
        <begin position="1108"/>
        <end position="1120"/>
    </location>
</feature>
<feature type="strand" evidence="26">
    <location>
        <begin position="1129"/>
        <end position="1131"/>
    </location>
</feature>
<feature type="helix" evidence="26">
    <location>
        <begin position="1136"/>
        <end position="1147"/>
    </location>
</feature>
<feature type="strand" evidence="26">
    <location>
        <begin position="1154"/>
        <end position="1156"/>
    </location>
</feature>
<feature type="helix" evidence="26">
    <location>
        <begin position="1165"/>
        <end position="1176"/>
    </location>
</feature>
<feature type="strand" evidence="26">
    <location>
        <begin position="1185"/>
        <end position="1188"/>
    </location>
</feature>
<feature type="helix" evidence="26">
    <location>
        <begin position="1193"/>
        <end position="1199"/>
    </location>
</feature>
<dbReference type="EMBL" id="AY054986">
    <property type="protein sequence ID" value="AAL15549.1"/>
    <property type="molecule type" value="mRNA"/>
</dbReference>
<dbReference type="EMBL" id="AY154460">
    <property type="protein sequence ID" value="AAO18156.1"/>
    <property type="molecule type" value="mRNA"/>
</dbReference>
<dbReference type="EMBL" id="AC011470">
    <property type="status" value="NOT_ANNOTATED_CDS"/>
    <property type="molecule type" value="Genomic_DNA"/>
</dbReference>
<dbReference type="EMBL" id="AC024580">
    <property type="status" value="NOT_ANNOTATED_CDS"/>
    <property type="molecule type" value="Genomic_DNA"/>
</dbReference>
<dbReference type="CCDS" id="CCDS12938.1"/>
<dbReference type="RefSeq" id="NP_703148.4">
    <property type="nucleotide sequence ID" value="NM_153447.4"/>
</dbReference>
<dbReference type="PDB" id="8X7V">
    <property type="method" value="EM"/>
    <property type="resolution" value="3.01 A"/>
    <property type="chains" value="A=58-1200"/>
</dbReference>
<dbReference type="PDB" id="8X7W">
    <property type="method" value="EM"/>
    <property type="resolution" value="3.36 A"/>
    <property type="chains" value="A/D=58-1200"/>
</dbReference>
<dbReference type="PDBsum" id="8X7V"/>
<dbReference type="PDBsum" id="8X7W"/>
<dbReference type="EMDB" id="EMD-38128"/>
<dbReference type="EMDB" id="EMD-38129"/>
<dbReference type="SMR" id="P59047"/>
<dbReference type="BioGRID" id="125965">
    <property type="interactions" value="14"/>
</dbReference>
<dbReference type="ComplexPortal" id="CPX-2210">
    <property type="entry name" value="Subcortical maternal complex"/>
</dbReference>
<dbReference type="CORUM" id="P59047"/>
<dbReference type="FunCoup" id="P59047">
    <property type="interactions" value="116"/>
</dbReference>
<dbReference type="IntAct" id="P59047">
    <property type="interactions" value="13"/>
</dbReference>
<dbReference type="STRING" id="9606.ENSP00000375063"/>
<dbReference type="GlyGen" id="P59047">
    <property type="glycosylation" value="1 site"/>
</dbReference>
<dbReference type="iPTMnet" id="P59047"/>
<dbReference type="PhosphoSitePlus" id="P59047"/>
<dbReference type="BioMuta" id="NLRP5"/>
<dbReference type="DMDM" id="215274029"/>
<dbReference type="jPOST" id="P59047"/>
<dbReference type="MassIVE" id="P59047"/>
<dbReference type="PaxDb" id="9606-ENSP00000375063"/>
<dbReference type="PeptideAtlas" id="P59047"/>
<dbReference type="ProteomicsDB" id="57122"/>
<dbReference type="Antibodypedia" id="46495">
    <property type="antibodies" value="79 antibodies from 26 providers"/>
</dbReference>
<dbReference type="DNASU" id="126206"/>
<dbReference type="Ensembl" id="ENST00000390649.8">
    <property type="protein sequence ID" value="ENSP00000375063.3"/>
    <property type="gene ID" value="ENSG00000171487.16"/>
</dbReference>
<dbReference type="GeneID" id="126206"/>
<dbReference type="KEGG" id="hsa:126206"/>
<dbReference type="MANE-Select" id="ENST00000390649.8">
    <property type="protein sequence ID" value="ENSP00000375063.3"/>
    <property type="RefSeq nucleotide sequence ID" value="NM_153447.4"/>
    <property type="RefSeq protein sequence ID" value="NP_703148.4"/>
</dbReference>
<dbReference type="UCSC" id="uc002qmj.4">
    <property type="organism name" value="human"/>
</dbReference>
<dbReference type="AGR" id="HGNC:21269"/>
<dbReference type="CTD" id="126206"/>
<dbReference type="DisGeNET" id="126206"/>
<dbReference type="GeneCards" id="NLRP5"/>
<dbReference type="HGNC" id="HGNC:21269">
    <property type="gene designation" value="NLRP5"/>
</dbReference>
<dbReference type="HPA" id="ENSG00000171487">
    <property type="expression patterns" value="Group enriched (ovary, parathyroid gland)"/>
</dbReference>
<dbReference type="MalaCards" id="NLRP5"/>
<dbReference type="MIM" id="609658">
    <property type="type" value="gene"/>
</dbReference>
<dbReference type="MIM" id="620333">
    <property type="type" value="phenotype"/>
</dbReference>
<dbReference type="neXtProt" id="NX_P59047"/>
<dbReference type="OpenTargets" id="ENSG00000171487"/>
<dbReference type="PharmGKB" id="PA162397970"/>
<dbReference type="VEuPathDB" id="HostDB:ENSG00000171487"/>
<dbReference type="eggNOG" id="ENOG502SBIG">
    <property type="taxonomic scope" value="Eukaryota"/>
</dbReference>
<dbReference type="GeneTree" id="ENSGT00940000162898"/>
<dbReference type="HOGENOM" id="CLU_002274_2_1_1"/>
<dbReference type="InParanoid" id="P59047"/>
<dbReference type="OMA" id="WKISIHI"/>
<dbReference type="OrthoDB" id="120976at2759"/>
<dbReference type="PAN-GO" id="P59047">
    <property type="GO annotations" value="6 GO annotations based on evolutionary models"/>
</dbReference>
<dbReference type="PhylomeDB" id="P59047"/>
<dbReference type="PathwayCommons" id="P59047"/>
<dbReference type="SignaLink" id="P59047"/>
<dbReference type="SIGNOR" id="P59047"/>
<dbReference type="BioGRID-ORCS" id="126206">
    <property type="hits" value="11 hits in 1147 CRISPR screens"/>
</dbReference>
<dbReference type="ChiTaRS" id="NLRP5">
    <property type="organism name" value="human"/>
</dbReference>
<dbReference type="GeneWiki" id="NLRP5"/>
<dbReference type="GenomeRNAi" id="126206"/>
<dbReference type="Pharos" id="P59047">
    <property type="development level" value="Tbio"/>
</dbReference>
<dbReference type="PRO" id="PR:P59047"/>
<dbReference type="Proteomes" id="UP000005640">
    <property type="component" value="Chromosome 19"/>
</dbReference>
<dbReference type="RNAct" id="P59047">
    <property type="molecule type" value="protein"/>
</dbReference>
<dbReference type="Bgee" id="ENSG00000171487">
    <property type="expression patterns" value="Expressed in secondary oocyte and 12 other cell types or tissues"/>
</dbReference>
<dbReference type="ExpressionAtlas" id="P59047">
    <property type="expression patterns" value="baseline and differential"/>
</dbReference>
<dbReference type="GO" id="GO:0005938">
    <property type="term" value="C:cell cortex"/>
    <property type="evidence" value="ECO:0000250"/>
    <property type="project" value="UniProtKB"/>
</dbReference>
<dbReference type="GO" id="GO:0060473">
    <property type="term" value="C:cortical granule"/>
    <property type="evidence" value="ECO:0000314"/>
    <property type="project" value="UniProtKB"/>
</dbReference>
<dbReference type="GO" id="GO:0005737">
    <property type="term" value="C:cytoplasm"/>
    <property type="evidence" value="ECO:0000314"/>
    <property type="project" value="UniProtKB"/>
</dbReference>
<dbReference type="GO" id="GO:0140095">
    <property type="term" value="C:cytoplasmic lattice"/>
    <property type="evidence" value="ECO:0000314"/>
    <property type="project" value="UniProtKB"/>
</dbReference>
<dbReference type="GO" id="GO:0005829">
    <property type="term" value="C:cytosol"/>
    <property type="evidence" value="ECO:0000318"/>
    <property type="project" value="GO_Central"/>
</dbReference>
<dbReference type="GO" id="GO:0005794">
    <property type="term" value="C:Golgi apparatus"/>
    <property type="evidence" value="ECO:0000314"/>
    <property type="project" value="UniProtKB"/>
</dbReference>
<dbReference type="GO" id="GO:0043231">
    <property type="term" value="C:intracellular membrane-bounded organelle"/>
    <property type="evidence" value="ECO:0000314"/>
    <property type="project" value="HPA"/>
</dbReference>
<dbReference type="GO" id="GO:0005739">
    <property type="term" value="C:mitochondrion"/>
    <property type="evidence" value="ECO:0000314"/>
    <property type="project" value="UniProtKB"/>
</dbReference>
<dbReference type="GO" id="GO:0005730">
    <property type="term" value="C:nucleolus"/>
    <property type="evidence" value="ECO:0000250"/>
    <property type="project" value="UniProtKB"/>
</dbReference>
<dbReference type="GO" id="GO:0005634">
    <property type="term" value="C:nucleus"/>
    <property type="evidence" value="ECO:0000314"/>
    <property type="project" value="UniProtKB"/>
</dbReference>
<dbReference type="GO" id="GO:0106333">
    <property type="term" value="C:subcortical maternal complex"/>
    <property type="evidence" value="ECO:0000314"/>
    <property type="project" value="UniProtKB"/>
</dbReference>
<dbReference type="GO" id="GO:0005524">
    <property type="term" value="F:ATP binding"/>
    <property type="evidence" value="ECO:0007669"/>
    <property type="project" value="UniProtKB-KW"/>
</dbReference>
<dbReference type="GO" id="GO:0140094">
    <property type="term" value="F:structural constituent of cytoplasmic lattice"/>
    <property type="evidence" value="ECO:0000250"/>
    <property type="project" value="UniProtKB"/>
</dbReference>
<dbReference type="GO" id="GO:0015631">
    <property type="term" value="F:tubulin binding"/>
    <property type="evidence" value="ECO:0000353"/>
    <property type="project" value="UniProtKB"/>
</dbReference>
<dbReference type="GO" id="GO:0007015">
    <property type="term" value="P:actin filament organization"/>
    <property type="evidence" value="ECO:0000250"/>
    <property type="project" value="UniProtKB"/>
</dbReference>
<dbReference type="GO" id="GO:0060471">
    <property type="term" value="P:cortical granule exocytosis"/>
    <property type="evidence" value="ECO:0000250"/>
    <property type="project" value="UniProtKB"/>
</dbReference>
<dbReference type="GO" id="GO:0051656">
    <property type="term" value="P:establishment of organelle localization"/>
    <property type="evidence" value="ECO:0000250"/>
    <property type="project" value="UniProtKB"/>
</dbReference>
<dbReference type="GO" id="GO:0051293">
    <property type="term" value="P:establishment of spindle localization"/>
    <property type="evidence" value="ECO:0000250"/>
    <property type="project" value="UniProtKB"/>
</dbReference>
<dbReference type="GO" id="GO:0006887">
    <property type="term" value="P:exocytosis"/>
    <property type="evidence" value="ECO:0000250"/>
    <property type="project" value="UniProtKB"/>
</dbReference>
<dbReference type="GO" id="GO:0040019">
    <property type="term" value="P:positive regulation of embryonic development"/>
    <property type="evidence" value="ECO:0000250"/>
    <property type="project" value="UniProtKB"/>
</dbReference>
<dbReference type="GO" id="GO:0140089">
    <property type="term" value="P:protein storage"/>
    <property type="evidence" value="ECO:0000250"/>
    <property type="project" value="UniProtKB"/>
</dbReference>
<dbReference type="GO" id="GO:0051302">
    <property type="term" value="P:regulation of cell division"/>
    <property type="evidence" value="ECO:0000250"/>
    <property type="project" value="UniProtKB"/>
</dbReference>
<dbReference type="GO" id="GO:0050727">
    <property type="term" value="P:regulation of inflammatory response"/>
    <property type="evidence" value="ECO:0000318"/>
    <property type="project" value="GO_Central"/>
</dbReference>
<dbReference type="GO" id="GO:0032880">
    <property type="term" value="P:regulation of protein localization"/>
    <property type="evidence" value="ECO:0000250"/>
    <property type="project" value="UniProtKB"/>
</dbReference>
<dbReference type="CDD" id="cd08320">
    <property type="entry name" value="Pyrin_NALPs"/>
    <property type="match status" value="1"/>
</dbReference>
<dbReference type="FunFam" id="3.40.50.300:FF:000442">
    <property type="entry name" value="NACHT, LRR and PYD domains-containing protein 3"/>
    <property type="match status" value="1"/>
</dbReference>
<dbReference type="FunFam" id="1.10.533.10:FF:000071">
    <property type="entry name" value="NACHT, LRR and PYD domains-containing protein 5"/>
    <property type="match status" value="1"/>
</dbReference>
<dbReference type="FunFam" id="3.80.10.10:FF:000584">
    <property type="entry name" value="NACHT, LRR and PYD domains-containing protein 5"/>
    <property type="match status" value="1"/>
</dbReference>
<dbReference type="Gene3D" id="1.10.533.10">
    <property type="entry name" value="Death Domain, Fas"/>
    <property type="match status" value="1"/>
</dbReference>
<dbReference type="Gene3D" id="3.40.50.300">
    <property type="entry name" value="P-loop containing nucleotide triphosphate hydrolases"/>
    <property type="match status" value="1"/>
</dbReference>
<dbReference type="Gene3D" id="3.80.10.10">
    <property type="entry name" value="Ribonuclease Inhibitor"/>
    <property type="match status" value="1"/>
</dbReference>
<dbReference type="InterPro" id="IPR004020">
    <property type="entry name" value="DAPIN"/>
</dbReference>
<dbReference type="InterPro" id="IPR011029">
    <property type="entry name" value="DEATH-like_dom_sf"/>
</dbReference>
<dbReference type="InterPro" id="IPR001611">
    <property type="entry name" value="Leu-rich_rpt"/>
</dbReference>
<dbReference type="InterPro" id="IPR032675">
    <property type="entry name" value="LRR_dom_sf"/>
</dbReference>
<dbReference type="InterPro" id="IPR007111">
    <property type="entry name" value="NACHT_NTPase"/>
</dbReference>
<dbReference type="InterPro" id="IPR041267">
    <property type="entry name" value="NLRP_HD2"/>
</dbReference>
<dbReference type="InterPro" id="IPR050637">
    <property type="entry name" value="NLRP_innate_immun_reg"/>
</dbReference>
<dbReference type="InterPro" id="IPR041075">
    <property type="entry name" value="NOD1/2_WH"/>
</dbReference>
<dbReference type="InterPro" id="IPR027417">
    <property type="entry name" value="P-loop_NTPase"/>
</dbReference>
<dbReference type="PANTHER" id="PTHR45690">
    <property type="entry name" value="NACHT, LRR AND PYD DOMAINS-CONTAINING PROTEIN 12"/>
    <property type="match status" value="1"/>
</dbReference>
<dbReference type="PANTHER" id="PTHR45690:SF7">
    <property type="entry name" value="NACHT, LRR AND PYD DOMAINS-CONTAINING PROTEIN 5"/>
    <property type="match status" value="1"/>
</dbReference>
<dbReference type="Pfam" id="PF13516">
    <property type="entry name" value="LRR_6"/>
    <property type="match status" value="6"/>
</dbReference>
<dbReference type="Pfam" id="PF05729">
    <property type="entry name" value="NACHT"/>
    <property type="match status" value="1"/>
</dbReference>
<dbReference type="Pfam" id="PF17776">
    <property type="entry name" value="NLRC4_HD2"/>
    <property type="match status" value="1"/>
</dbReference>
<dbReference type="Pfam" id="PF17779">
    <property type="entry name" value="NOD2_WH"/>
    <property type="match status" value="1"/>
</dbReference>
<dbReference type="Pfam" id="PF02758">
    <property type="entry name" value="PYRIN"/>
    <property type="match status" value="1"/>
</dbReference>
<dbReference type="SMART" id="SM00368">
    <property type="entry name" value="LRR_RI"/>
    <property type="match status" value="10"/>
</dbReference>
<dbReference type="SMART" id="SM01289">
    <property type="entry name" value="PYRIN"/>
    <property type="match status" value="1"/>
</dbReference>
<dbReference type="SUPFAM" id="SSF47986">
    <property type="entry name" value="DEATH domain"/>
    <property type="match status" value="1"/>
</dbReference>
<dbReference type="SUPFAM" id="SSF52540">
    <property type="entry name" value="P-loop containing nucleoside triphosphate hydrolases"/>
    <property type="match status" value="1"/>
</dbReference>
<dbReference type="SUPFAM" id="SSF52047">
    <property type="entry name" value="RNI-like"/>
    <property type="match status" value="2"/>
</dbReference>
<dbReference type="PROSITE" id="PS50824">
    <property type="entry name" value="DAPIN"/>
    <property type="match status" value="1"/>
</dbReference>
<dbReference type="PROSITE" id="PS50837">
    <property type="entry name" value="NACHT"/>
    <property type="match status" value="1"/>
</dbReference>
<evidence type="ECO:0000250" key="1">
    <source>
        <dbReference type="UniProtKB" id="Q9R1M5"/>
    </source>
</evidence>
<evidence type="ECO:0000255" key="2">
    <source>
        <dbReference type="PROSITE-ProRule" id="PRU00061"/>
    </source>
</evidence>
<evidence type="ECO:0000255" key="3">
    <source>
        <dbReference type="PROSITE-ProRule" id="PRU00136"/>
    </source>
</evidence>
<evidence type="ECO:0000256" key="4">
    <source>
        <dbReference type="SAM" id="MobiDB-lite"/>
    </source>
</evidence>
<evidence type="ECO:0000269" key="5">
    <source>
    </source>
</evidence>
<evidence type="ECO:0000269" key="6">
    <source>
    </source>
</evidence>
<evidence type="ECO:0000269" key="7">
    <source>
    </source>
</evidence>
<evidence type="ECO:0000269" key="8">
    <source>
    </source>
</evidence>
<evidence type="ECO:0000269" key="9">
    <source>
    </source>
</evidence>
<evidence type="ECO:0000269" key="10">
    <source>
    </source>
</evidence>
<evidence type="ECO:0000269" key="11">
    <source>
    </source>
</evidence>
<evidence type="ECO:0000269" key="12">
    <source>
    </source>
</evidence>
<evidence type="ECO:0000269" key="13">
    <source>
    </source>
</evidence>
<evidence type="ECO:0000269" key="14">
    <source>
    </source>
</evidence>
<evidence type="ECO:0000269" key="15">
    <source>
    </source>
</evidence>
<evidence type="ECO:0000269" key="16">
    <source>
    </source>
</evidence>
<evidence type="ECO:0000269" key="17">
    <source>
    </source>
</evidence>
<evidence type="ECO:0000269" key="18">
    <source>
    </source>
</evidence>
<evidence type="ECO:0000269" key="19">
    <source>
    </source>
</evidence>
<evidence type="ECO:0000269" key="20">
    <source>
    </source>
</evidence>
<evidence type="ECO:0000269" key="21">
    <source>
    </source>
</evidence>
<evidence type="ECO:0000303" key="22">
    <source>
    </source>
</evidence>
<evidence type="ECO:0000305" key="23"/>
<evidence type="ECO:0007744" key="24">
    <source>
        <dbReference type="PDB" id="8X7V"/>
    </source>
</evidence>
<evidence type="ECO:0007744" key="25">
    <source>
        <dbReference type="PDB" id="8X7W"/>
    </source>
</evidence>
<evidence type="ECO:0007829" key="26">
    <source>
        <dbReference type="PDB" id="8X7V"/>
    </source>
</evidence>
<evidence type="ECO:0007829" key="27">
    <source>
        <dbReference type="PDB" id="8X7W"/>
    </source>
</evidence>